<proteinExistence type="evidence at protein level"/>
<protein>
    <recommendedName>
        <fullName>Nuclear transcription factor Y subunit C-4</fullName>
        <shortName>AtNF-YC-4</shortName>
    </recommendedName>
</protein>
<accession>Q9FMV5</accession>
<name>NFYC4_ARATH</name>
<evidence type="ECO:0000250" key="1"/>
<evidence type="ECO:0000256" key="2">
    <source>
        <dbReference type="SAM" id="MobiDB-lite"/>
    </source>
</evidence>
<evidence type="ECO:0000269" key="3">
    <source>
    </source>
</evidence>
<evidence type="ECO:0000269" key="4">
    <source>
    </source>
</evidence>
<evidence type="ECO:0000305" key="5"/>
<evidence type="ECO:0007829" key="6">
    <source>
        <dbReference type="PDB" id="7CVO"/>
    </source>
</evidence>
<sequence>MDNNNNNNNQQPPPTSVYPPGSAVTTVIPPPPSGSASIVTGGGATYHHLLQQQQQQLQMFWTYQRQEIEQVNDFKNHQLPLARIKKIMKADEDVRMISAEAPILFAKACELFILELTIRSWLHAEENKRRTLQKNDIAAAITRTDIFDFLVDIVPREEIKEEEDAASALGGGGMVAPAASGVPYYYPPMGQPAVPGGMMIGRPAMDPSGVYAQPPSQAWQSVWQNSAGGGDDVSYGSGGSSGHGNLDSQG</sequence>
<reference key="1">
    <citation type="journal article" date="1997" name="DNA Res.">
        <title>Structural analysis of Arabidopsis thaliana chromosome 5. III. Sequence features of the regions of 1,191,918 bp covered by seventeen physically assigned P1 clones.</title>
        <authorList>
            <person name="Nakamura Y."/>
            <person name="Sato S."/>
            <person name="Kaneko T."/>
            <person name="Kotani H."/>
            <person name="Asamizu E."/>
            <person name="Miyajima N."/>
            <person name="Tabata S."/>
        </authorList>
    </citation>
    <scope>NUCLEOTIDE SEQUENCE [LARGE SCALE GENOMIC DNA]</scope>
    <source>
        <strain>cv. Columbia</strain>
    </source>
</reference>
<reference key="2">
    <citation type="journal article" date="2017" name="Plant J.">
        <title>Araport11: a complete reannotation of the Arabidopsis thaliana reference genome.</title>
        <authorList>
            <person name="Cheng C.Y."/>
            <person name="Krishnakumar V."/>
            <person name="Chan A.P."/>
            <person name="Thibaud-Nissen F."/>
            <person name="Schobel S."/>
            <person name="Town C.D."/>
        </authorList>
    </citation>
    <scope>GENOME REANNOTATION</scope>
    <source>
        <strain>cv. Columbia</strain>
    </source>
</reference>
<reference key="3">
    <citation type="journal article" date="2003" name="Science">
        <title>Empirical analysis of transcriptional activity in the Arabidopsis genome.</title>
        <authorList>
            <person name="Yamada K."/>
            <person name="Lim J."/>
            <person name="Dale J.M."/>
            <person name="Chen H."/>
            <person name="Shinn P."/>
            <person name="Palm C.J."/>
            <person name="Southwick A.M."/>
            <person name="Wu H.C."/>
            <person name="Kim C.J."/>
            <person name="Nguyen M."/>
            <person name="Pham P.K."/>
            <person name="Cheuk R.F."/>
            <person name="Karlin-Newmann G."/>
            <person name="Liu S.X."/>
            <person name="Lam B."/>
            <person name="Sakano H."/>
            <person name="Wu T."/>
            <person name="Yu G."/>
            <person name="Miranda M."/>
            <person name="Quach H.L."/>
            <person name="Tripp M."/>
            <person name="Chang C.H."/>
            <person name="Lee J.M."/>
            <person name="Toriumi M.J."/>
            <person name="Chan M.M."/>
            <person name="Tang C.C."/>
            <person name="Onodera C.S."/>
            <person name="Deng J.M."/>
            <person name="Akiyama K."/>
            <person name="Ansari Y."/>
            <person name="Arakawa T."/>
            <person name="Banh J."/>
            <person name="Banno F."/>
            <person name="Bowser L."/>
            <person name="Brooks S.Y."/>
            <person name="Carninci P."/>
            <person name="Chao Q."/>
            <person name="Choy N."/>
            <person name="Enju A."/>
            <person name="Goldsmith A.D."/>
            <person name="Gurjal M."/>
            <person name="Hansen N.F."/>
            <person name="Hayashizaki Y."/>
            <person name="Johnson-Hopson C."/>
            <person name="Hsuan V.W."/>
            <person name="Iida K."/>
            <person name="Karnes M."/>
            <person name="Khan S."/>
            <person name="Koesema E."/>
            <person name="Ishida J."/>
            <person name="Jiang P.X."/>
            <person name="Jones T."/>
            <person name="Kawai J."/>
            <person name="Kamiya A."/>
            <person name="Meyers C."/>
            <person name="Nakajima M."/>
            <person name="Narusaka M."/>
            <person name="Seki M."/>
            <person name="Sakurai T."/>
            <person name="Satou M."/>
            <person name="Tamse R."/>
            <person name="Vaysberg M."/>
            <person name="Wallender E.K."/>
            <person name="Wong C."/>
            <person name="Yamamura Y."/>
            <person name="Yuan S."/>
            <person name="Shinozaki K."/>
            <person name="Davis R.W."/>
            <person name="Theologis A."/>
            <person name="Ecker J.R."/>
        </authorList>
    </citation>
    <scope>NUCLEOTIDE SEQUENCE [LARGE SCALE MRNA]</scope>
    <source>
        <strain>cv. Columbia</strain>
    </source>
</reference>
<reference key="4">
    <citation type="journal article" date="2001" name="Gene">
        <title>Regulation of the CCAAT-binding NF-Y subunits in Arabidopsis thaliana.</title>
        <authorList>
            <person name="Gusmaroli G."/>
            <person name="Tonelli C."/>
            <person name="Mantovani R."/>
        </authorList>
    </citation>
    <scope>TISSUE SPECIFICITY</scope>
</reference>
<reference key="5">
    <citation type="journal article" date="2002" name="Gene">
        <title>Regulation of novel members of the Arabidopsis thaliana CCAAT-binding nuclear factor Y subunits.</title>
        <authorList>
            <person name="Gusmaroli G."/>
            <person name="Tonelli C."/>
            <person name="Mantovani R."/>
        </authorList>
    </citation>
    <scope>GENE FAMILY</scope>
    <scope>NOMENCLATURE</scope>
</reference>
<reference key="6">
    <citation type="journal article" date="2007" name="Plant Physiol.">
        <title>The GCR1, GPA1, PRN1, NF-Y signal chain mediates both blue light and abscisic acid responses in Arabidopsis.</title>
        <authorList>
            <person name="Warpeha K.M."/>
            <person name="Upadhyay S."/>
            <person name="Yeh J."/>
            <person name="Adamiak J."/>
            <person name="Hawkins S.I."/>
            <person name="Lapik Y.R."/>
            <person name="Anderson M.B."/>
            <person name="Kaufman L.S."/>
        </authorList>
    </citation>
    <scope>FUNCTION</scope>
    <scope>DISRUPTION PHENOTYPE</scope>
    <scope>TISSUE SPECIFICITY</scope>
    <source>
        <strain>cv. Columbia</strain>
        <strain>cv. Wassilewskija</strain>
    </source>
</reference>
<gene>
    <name type="primary">NFYC4</name>
    <name type="ordered locus">At5g63470</name>
    <name type="ORF">MLE2.10</name>
</gene>
<feature type="chain" id="PRO_0000218253" description="Nuclear transcription factor Y subunit C-4">
    <location>
        <begin position="1"/>
        <end position="250"/>
    </location>
</feature>
<feature type="region of interest" description="Disordered" evidence="2">
    <location>
        <begin position="1"/>
        <end position="35"/>
    </location>
</feature>
<feature type="region of interest" description="Disordered" evidence="2">
    <location>
        <begin position="209"/>
        <end position="250"/>
    </location>
</feature>
<feature type="compositionally biased region" description="Low complexity" evidence="2">
    <location>
        <begin position="1"/>
        <end position="10"/>
    </location>
</feature>
<feature type="compositionally biased region" description="Polar residues" evidence="2">
    <location>
        <begin position="214"/>
        <end position="225"/>
    </location>
</feature>
<feature type="compositionally biased region" description="Gly residues" evidence="2">
    <location>
        <begin position="227"/>
        <end position="242"/>
    </location>
</feature>
<feature type="helix" evidence="6">
    <location>
        <begin position="81"/>
        <end position="89"/>
    </location>
</feature>
<feature type="helix" evidence="6">
    <location>
        <begin position="100"/>
        <end position="126"/>
    </location>
</feature>
<feature type="strand" evidence="6">
    <location>
        <begin position="130"/>
        <end position="132"/>
    </location>
</feature>
<feature type="helix" evidence="6">
    <location>
        <begin position="134"/>
        <end position="143"/>
    </location>
</feature>
<feature type="helix" evidence="6">
    <location>
        <begin position="145"/>
        <end position="150"/>
    </location>
</feature>
<keyword id="KW-0002">3D-structure</keyword>
<keyword id="KW-0938">Abscisic acid signaling pathway</keyword>
<keyword id="KW-0010">Activator</keyword>
<keyword id="KW-0238">DNA-binding</keyword>
<keyword id="KW-0539">Nucleus</keyword>
<keyword id="KW-1185">Reference proteome</keyword>
<keyword id="KW-0804">Transcription</keyword>
<keyword id="KW-0805">Transcription regulation</keyword>
<dbReference type="EMBL" id="AB007649">
    <property type="protein sequence ID" value="BAB08812.1"/>
    <property type="molecule type" value="Genomic_DNA"/>
</dbReference>
<dbReference type="EMBL" id="CP002688">
    <property type="protein sequence ID" value="AED97755.1"/>
    <property type="molecule type" value="Genomic_DNA"/>
</dbReference>
<dbReference type="EMBL" id="CP002688">
    <property type="protein sequence ID" value="AED97756.1"/>
    <property type="molecule type" value="Genomic_DNA"/>
</dbReference>
<dbReference type="EMBL" id="AY072402">
    <property type="protein sequence ID" value="AAL62394.1"/>
    <property type="molecule type" value="mRNA"/>
</dbReference>
<dbReference type="EMBL" id="BT000218">
    <property type="protein sequence ID" value="AAN15537.1"/>
    <property type="molecule type" value="mRNA"/>
</dbReference>
<dbReference type="RefSeq" id="NP_001032130.1">
    <property type="nucleotide sequence ID" value="NM_001037053.2"/>
</dbReference>
<dbReference type="RefSeq" id="NP_201152.1">
    <property type="nucleotide sequence ID" value="NM_125742.6"/>
</dbReference>
<dbReference type="PDB" id="7CVO">
    <property type="method" value="X-ray"/>
    <property type="resolution" value="2.60 A"/>
    <property type="chains" value="A/F=72-156"/>
</dbReference>
<dbReference type="PDBsum" id="7CVO"/>
<dbReference type="SMR" id="Q9FMV5"/>
<dbReference type="BioGRID" id="21708">
    <property type="interactions" value="30"/>
</dbReference>
<dbReference type="FunCoup" id="Q9FMV5">
    <property type="interactions" value="1053"/>
</dbReference>
<dbReference type="IntAct" id="Q9FMV5">
    <property type="interactions" value="7"/>
</dbReference>
<dbReference type="STRING" id="3702.Q9FMV5"/>
<dbReference type="PaxDb" id="3702-AT5G63470.1"/>
<dbReference type="EnsemblPlants" id="AT5G63470.1">
    <property type="protein sequence ID" value="AT5G63470.1"/>
    <property type="gene ID" value="AT5G63470"/>
</dbReference>
<dbReference type="EnsemblPlants" id="AT5G63470.2">
    <property type="protein sequence ID" value="AT5G63470.2"/>
    <property type="gene ID" value="AT5G63470"/>
</dbReference>
<dbReference type="GeneID" id="836466"/>
<dbReference type="Gramene" id="AT5G63470.1">
    <property type="protein sequence ID" value="AT5G63470.1"/>
    <property type="gene ID" value="AT5G63470"/>
</dbReference>
<dbReference type="Gramene" id="AT5G63470.2">
    <property type="protein sequence ID" value="AT5G63470.2"/>
    <property type="gene ID" value="AT5G63470"/>
</dbReference>
<dbReference type="KEGG" id="ath:AT5G63470"/>
<dbReference type="Araport" id="AT5G63470"/>
<dbReference type="TAIR" id="AT5G63470">
    <property type="gene designation" value="NF-YC4"/>
</dbReference>
<dbReference type="eggNOG" id="KOG1657">
    <property type="taxonomic scope" value="Eukaryota"/>
</dbReference>
<dbReference type="HOGENOM" id="CLU_045277_0_1_1"/>
<dbReference type="InParanoid" id="Q9FMV5"/>
<dbReference type="OMA" id="WQWQTTE"/>
<dbReference type="OrthoDB" id="1272441at2759"/>
<dbReference type="PhylomeDB" id="Q9FMV5"/>
<dbReference type="PRO" id="PR:Q9FMV5"/>
<dbReference type="Proteomes" id="UP000006548">
    <property type="component" value="Chromosome 5"/>
</dbReference>
<dbReference type="ExpressionAtlas" id="Q9FMV5">
    <property type="expression patterns" value="baseline and differential"/>
</dbReference>
<dbReference type="GO" id="GO:0005829">
    <property type="term" value="C:cytosol"/>
    <property type="evidence" value="ECO:0000353"/>
    <property type="project" value="TAIR"/>
</dbReference>
<dbReference type="GO" id="GO:0005634">
    <property type="term" value="C:nucleus"/>
    <property type="evidence" value="ECO:0000353"/>
    <property type="project" value="TAIR"/>
</dbReference>
<dbReference type="GO" id="GO:0009536">
    <property type="term" value="C:plastid"/>
    <property type="evidence" value="ECO:0007005"/>
    <property type="project" value="TAIR"/>
</dbReference>
<dbReference type="GO" id="GO:0003677">
    <property type="term" value="F:DNA binding"/>
    <property type="evidence" value="ECO:0007669"/>
    <property type="project" value="UniProtKB-KW"/>
</dbReference>
<dbReference type="GO" id="GO:0003700">
    <property type="term" value="F:DNA-binding transcription factor activity"/>
    <property type="evidence" value="ECO:0000250"/>
    <property type="project" value="TAIR"/>
</dbReference>
<dbReference type="GO" id="GO:0046982">
    <property type="term" value="F:protein heterodimerization activity"/>
    <property type="evidence" value="ECO:0007669"/>
    <property type="project" value="InterPro"/>
</dbReference>
<dbReference type="GO" id="GO:0009738">
    <property type="term" value="P:abscisic acid-activated signaling pathway"/>
    <property type="evidence" value="ECO:0000315"/>
    <property type="project" value="UniProtKB"/>
</dbReference>
<dbReference type="GO" id="GO:0009740">
    <property type="term" value="P:gibberellic acid mediated signaling pathway"/>
    <property type="evidence" value="ECO:0000316"/>
    <property type="project" value="TAIR"/>
</dbReference>
<dbReference type="GO" id="GO:2000905">
    <property type="term" value="P:negative regulation of starch metabolic process"/>
    <property type="evidence" value="ECO:0000315"/>
    <property type="project" value="TAIR"/>
</dbReference>
<dbReference type="GO" id="GO:2000306">
    <property type="term" value="P:positive regulation of photomorphogenesis"/>
    <property type="evidence" value="ECO:0000315"/>
    <property type="project" value="TAIR"/>
</dbReference>
<dbReference type="GO" id="GO:0051247">
    <property type="term" value="P:positive regulation of protein metabolic process"/>
    <property type="evidence" value="ECO:0000315"/>
    <property type="project" value="TAIR"/>
</dbReference>
<dbReference type="GO" id="GO:0010468">
    <property type="term" value="P:regulation of gene expression"/>
    <property type="evidence" value="ECO:0000315"/>
    <property type="project" value="TAIR"/>
</dbReference>
<dbReference type="GO" id="GO:0048586">
    <property type="term" value="P:regulation of long-day photoperiodism, flowering"/>
    <property type="evidence" value="ECO:0000316"/>
    <property type="project" value="TAIR"/>
</dbReference>
<dbReference type="GO" id="GO:0010029">
    <property type="term" value="P:regulation of seed germination"/>
    <property type="evidence" value="ECO:0000316"/>
    <property type="project" value="TAIR"/>
</dbReference>
<dbReference type="CDD" id="cd22908">
    <property type="entry name" value="HFD_NFYC-like"/>
    <property type="match status" value="1"/>
</dbReference>
<dbReference type="FunFam" id="1.10.20.10:FF:000006">
    <property type="entry name" value="Nuclear transcription factor Y subunit gamma"/>
    <property type="match status" value="1"/>
</dbReference>
<dbReference type="Gene3D" id="1.10.20.10">
    <property type="entry name" value="Histone, subunit A"/>
    <property type="match status" value="1"/>
</dbReference>
<dbReference type="InterPro" id="IPR009072">
    <property type="entry name" value="Histone-fold"/>
</dbReference>
<dbReference type="InterPro" id="IPR007125">
    <property type="entry name" value="Histone_H2A/H2B/H3"/>
</dbReference>
<dbReference type="InterPro" id="IPR050568">
    <property type="entry name" value="Transcr_DNA_Rep_Reg"/>
</dbReference>
<dbReference type="PANTHER" id="PTHR10252">
    <property type="entry name" value="HISTONE-LIKE TRANSCRIPTION FACTOR CCAAT-RELATED"/>
    <property type="match status" value="1"/>
</dbReference>
<dbReference type="PANTHER" id="PTHR10252:SF39">
    <property type="entry name" value="NUCLEAR TRANSCRIPTION FACTOR Y SUBUNIT C-6"/>
    <property type="match status" value="1"/>
</dbReference>
<dbReference type="Pfam" id="PF00125">
    <property type="entry name" value="Histone"/>
    <property type="match status" value="1"/>
</dbReference>
<dbReference type="SUPFAM" id="SSF47113">
    <property type="entry name" value="Histone-fold"/>
    <property type="match status" value="1"/>
</dbReference>
<organism>
    <name type="scientific">Arabidopsis thaliana</name>
    <name type="common">Mouse-ear cress</name>
    <dbReference type="NCBI Taxonomy" id="3702"/>
    <lineage>
        <taxon>Eukaryota</taxon>
        <taxon>Viridiplantae</taxon>
        <taxon>Streptophyta</taxon>
        <taxon>Embryophyta</taxon>
        <taxon>Tracheophyta</taxon>
        <taxon>Spermatophyta</taxon>
        <taxon>Magnoliopsida</taxon>
        <taxon>eudicotyledons</taxon>
        <taxon>Gunneridae</taxon>
        <taxon>Pentapetalae</taxon>
        <taxon>rosids</taxon>
        <taxon>malvids</taxon>
        <taxon>Brassicales</taxon>
        <taxon>Brassicaceae</taxon>
        <taxon>Camelineae</taxon>
        <taxon>Arabidopsis</taxon>
    </lineage>
</organism>
<comment type="function">
    <text evidence="1 4">Stimulates the transcription of various genes by recognizing and binding to a CCAAT motif in promoters (By similarity). Involved in the abscisic acid (ABA) signaling pathway.</text>
</comment>
<comment type="subunit">
    <text evidence="1">Heterotrimeric transcription factor composed of three components, NF-YA, NF-YB and NF-YC. NF-YB and NF-YC must interact and dimerize for NF-YA association and DNA binding (By similarity).</text>
</comment>
<comment type="interaction">
    <interactant intactId="EBI-2466018">
        <id>Q9FMV5</id>
    </interactant>
    <interactant intactId="EBI-7920168">
        <id>Q8L500</id>
        <label>APRR9</label>
    </interactant>
    <organismsDiffer>false</organismsDiffer>
    <experiments>3</experiments>
</comment>
<comment type="interaction">
    <interactant intactId="EBI-2466018">
        <id>Q9FMV5</id>
    </interactant>
    <interactant intactId="EBI-2460434">
        <id>Q9LRH6</id>
        <label>GATA25</label>
    </interactant>
    <organismsDiffer>false</organismsDiffer>
    <experiments>3</experiments>
</comment>
<comment type="interaction">
    <interactant intactId="EBI-2466018">
        <id>Q9FMV5</id>
    </interactant>
    <interactant intactId="EBI-15199673">
        <id>Q7XA73</id>
        <label>TIFY4A</label>
    </interactant>
    <organismsDiffer>false</organismsDiffer>
    <experiments>3</experiments>
</comment>
<comment type="interaction">
    <interactant intactId="EBI-2466018">
        <id>Q9FMV5</id>
    </interactant>
    <interactant intactId="EBI-15206004">
        <id>Q8GY55</id>
        <label>TIFY4B</label>
    </interactant>
    <organismsDiffer>false</organismsDiffer>
    <experiments>3</experiments>
</comment>
<comment type="subcellular location">
    <subcellularLocation>
        <location evidence="1">Nucleus</location>
    </subcellularLocation>
</comment>
<comment type="tissue specificity">
    <text evidence="3 4">Ubiquitous. Present in etiolated seedlings.</text>
</comment>
<comment type="disruption phenotype">
    <text evidence="4">Altered response to abscisic acid (ABA).</text>
</comment>
<comment type="similarity">
    <text evidence="5">Belongs to the NFYC/HAP5 subunit family.</text>
</comment>